<protein>
    <recommendedName>
        <fullName evidence="1">NADH-quinone oxidoreductase subunit D 1</fullName>
        <ecNumber evidence="1">7.1.1.-</ecNumber>
    </recommendedName>
    <alternativeName>
        <fullName evidence="1">NADH dehydrogenase I subunit D 1</fullName>
    </alternativeName>
    <alternativeName>
        <fullName evidence="1">NDH-1 subunit D 1</fullName>
    </alternativeName>
</protein>
<accession>Q2IL06</accession>
<proteinExistence type="inferred from homology"/>
<gene>
    <name evidence="1" type="primary">nuoD1</name>
    <name type="ordered locus">Adeh_2567</name>
</gene>
<comment type="function">
    <text evidence="1">NDH-1 shuttles electrons from NADH, via FMN and iron-sulfur (Fe-S) centers, to quinones in the respiratory chain. The immediate electron acceptor for the enzyme in this species is believed to be ubiquinone. Couples the redox reaction to proton translocation (for every two electrons transferred, four hydrogen ions are translocated across the cytoplasmic membrane), and thus conserves the redox energy in a proton gradient.</text>
</comment>
<comment type="catalytic activity">
    <reaction evidence="1">
        <text>a quinone + NADH + 5 H(+)(in) = a quinol + NAD(+) + 4 H(+)(out)</text>
        <dbReference type="Rhea" id="RHEA:57888"/>
        <dbReference type="ChEBI" id="CHEBI:15378"/>
        <dbReference type="ChEBI" id="CHEBI:24646"/>
        <dbReference type="ChEBI" id="CHEBI:57540"/>
        <dbReference type="ChEBI" id="CHEBI:57945"/>
        <dbReference type="ChEBI" id="CHEBI:132124"/>
    </reaction>
</comment>
<comment type="subunit">
    <text evidence="1">NDH-1 is composed of 14 different subunits. Subunits NuoB, C, D, E, F, and G constitute the peripheral sector of the complex.</text>
</comment>
<comment type="subcellular location">
    <subcellularLocation>
        <location evidence="1">Cell inner membrane</location>
        <topology evidence="1">Peripheral membrane protein</topology>
        <orientation evidence="1">Cytoplasmic side</orientation>
    </subcellularLocation>
</comment>
<comment type="similarity">
    <text evidence="1">Belongs to the complex I 49 kDa subunit family.</text>
</comment>
<comment type="sequence caution" evidence="3">
    <conflict type="erroneous initiation">
        <sequence resource="EMBL-CDS" id="ABC82337"/>
    </conflict>
</comment>
<organism>
    <name type="scientific">Anaeromyxobacter dehalogenans (strain 2CP-C)</name>
    <dbReference type="NCBI Taxonomy" id="290397"/>
    <lineage>
        <taxon>Bacteria</taxon>
        <taxon>Pseudomonadati</taxon>
        <taxon>Myxococcota</taxon>
        <taxon>Myxococcia</taxon>
        <taxon>Myxococcales</taxon>
        <taxon>Cystobacterineae</taxon>
        <taxon>Anaeromyxobacteraceae</taxon>
        <taxon>Anaeromyxobacter</taxon>
    </lineage>
</organism>
<reference key="1">
    <citation type="submission" date="2006-01" db="EMBL/GenBank/DDBJ databases">
        <title>Complete sequence of Anaeromyxobacter dehalogenans 2CP-C.</title>
        <authorList>
            <person name="Copeland A."/>
            <person name="Lucas S."/>
            <person name="Lapidus A."/>
            <person name="Barry K."/>
            <person name="Detter J.C."/>
            <person name="Glavina T."/>
            <person name="Hammon N."/>
            <person name="Israni S."/>
            <person name="Pitluck S."/>
            <person name="Brettin T."/>
            <person name="Bruce D."/>
            <person name="Han C."/>
            <person name="Tapia R."/>
            <person name="Gilna P."/>
            <person name="Kiss H."/>
            <person name="Schmutz J."/>
            <person name="Larimer F."/>
            <person name="Land M."/>
            <person name="Kyrpides N."/>
            <person name="Anderson I."/>
            <person name="Sanford R.A."/>
            <person name="Ritalahti K.M."/>
            <person name="Thomas H.S."/>
            <person name="Kirby J.R."/>
            <person name="Zhulin I.B."/>
            <person name="Loeffler F.E."/>
            <person name="Richardson P."/>
        </authorList>
    </citation>
    <scope>NUCLEOTIDE SEQUENCE [LARGE SCALE GENOMIC DNA]</scope>
    <source>
        <strain>2CP-C</strain>
    </source>
</reference>
<name>NUOD1_ANADE</name>
<keyword id="KW-0997">Cell inner membrane</keyword>
<keyword id="KW-1003">Cell membrane</keyword>
<keyword id="KW-0472">Membrane</keyword>
<keyword id="KW-0520">NAD</keyword>
<keyword id="KW-0874">Quinone</keyword>
<keyword id="KW-1185">Reference proteome</keyword>
<keyword id="KW-1278">Translocase</keyword>
<keyword id="KW-0813">Transport</keyword>
<keyword id="KW-0830">Ubiquinone</keyword>
<evidence type="ECO:0000255" key="1">
    <source>
        <dbReference type="HAMAP-Rule" id="MF_01358"/>
    </source>
</evidence>
<evidence type="ECO:0000256" key="2">
    <source>
        <dbReference type="SAM" id="MobiDB-lite"/>
    </source>
</evidence>
<evidence type="ECO:0000305" key="3"/>
<sequence length="430" mass="47526">MSEAKGVGGIDPRATPGSAGAGERPPMGTVSRAGDGELYAPMPSKHMVINLGPSHPAMHGVTRAVVELNGEIIEEMKLDIGFLHRGFEKSCENVTWGQVFPYTDRLNYVSSIMNNVGFALAVEKLAKLEIPERARYLRVITSEIHRICDHLTLVGAMAMELGAMTVFLYGIEARDLLWDRLAELCGARLTSNYARIGGVARDMPEGWQEKTLKVLDRVVAIREEIGQLLNRNRIFIDRCLNTGKVSREDALELGFTGPCLRASGEPYDIRKAAPYLVYDRLDFDIPVGSNGDNFDRYLMRMEEMRQSDKIIRQCFEQMAPGEIIVQDFRYALPPKPLVYGTIEGVMAHFKLVMEGIKVPAGEVYSYTEAANGELGFYVVSDGGGRPYKLGLRAPGWPMLAALPVMTKGSLLSDLIPTFDSINMIGGEVEQ</sequence>
<feature type="chain" id="PRO_0000371816" description="NADH-quinone oxidoreductase subunit D 1">
    <location>
        <begin position="1"/>
        <end position="430"/>
    </location>
</feature>
<feature type="region of interest" description="Disordered" evidence="2">
    <location>
        <begin position="1"/>
        <end position="36"/>
    </location>
</feature>
<dbReference type="EC" id="7.1.1.-" evidence="1"/>
<dbReference type="EMBL" id="CP000251">
    <property type="protein sequence ID" value="ABC82337.1"/>
    <property type="status" value="ALT_INIT"/>
    <property type="molecule type" value="Genomic_DNA"/>
</dbReference>
<dbReference type="RefSeq" id="WP_041453534.1">
    <property type="nucleotide sequence ID" value="NC_007760.1"/>
</dbReference>
<dbReference type="SMR" id="Q2IL06"/>
<dbReference type="STRING" id="290397.Adeh_2567"/>
<dbReference type="KEGG" id="ade:Adeh_2567"/>
<dbReference type="eggNOG" id="COG0649">
    <property type="taxonomic scope" value="Bacteria"/>
</dbReference>
<dbReference type="HOGENOM" id="CLU_015134_1_2_7"/>
<dbReference type="OrthoDB" id="9801496at2"/>
<dbReference type="Proteomes" id="UP000001935">
    <property type="component" value="Chromosome"/>
</dbReference>
<dbReference type="GO" id="GO:0005886">
    <property type="term" value="C:plasma membrane"/>
    <property type="evidence" value="ECO:0007669"/>
    <property type="project" value="UniProtKB-SubCell"/>
</dbReference>
<dbReference type="GO" id="GO:0051287">
    <property type="term" value="F:NAD binding"/>
    <property type="evidence" value="ECO:0007669"/>
    <property type="project" value="InterPro"/>
</dbReference>
<dbReference type="GO" id="GO:0050136">
    <property type="term" value="F:NADH:ubiquinone reductase (non-electrogenic) activity"/>
    <property type="evidence" value="ECO:0007669"/>
    <property type="project" value="UniProtKB-UniRule"/>
</dbReference>
<dbReference type="GO" id="GO:0048038">
    <property type="term" value="F:quinone binding"/>
    <property type="evidence" value="ECO:0007669"/>
    <property type="project" value="UniProtKB-KW"/>
</dbReference>
<dbReference type="Gene3D" id="1.10.645.10">
    <property type="entry name" value="Cytochrome-c3 Hydrogenase, chain B"/>
    <property type="match status" value="1"/>
</dbReference>
<dbReference type="HAMAP" id="MF_01358">
    <property type="entry name" value="NDH1_NuoD"/>
    <property type="match status" value="1"/>
</dbReference>
<dbReference type="InterPro" id="IPR001135">
    <property type="entry name" value="NADH_Q_OxRdtase_suD"/>
</dbReference>
<dbReference type="InterPro" id="IPR022885">
    <property type="entry name" value="NDH1_su_D/H"/>
</dbReference>
<dbReference type="InterPro" id="IPR029014">
    <property type="entry name" value="NiFe-Hase_large"/>
</dbReference>
<dbReference type="NCBIfam" id="TIGR01962">
    <property type="entry name" value="NuoD"/>
    <property type="match status" value="1"/>
</dbReference>
<dbReference type="NCBIfam" id="NF004739">
    <property type="entry name" value="PRK06075.1"/>
    <property type="match status" value="1"/>
</dbReference>
<dbReference type="PANTHER" id="PTHR11993:SF10">
    <property type="entry name" value="NADH DEHYDROGENASE [UBIQUINONE] IRON-SULFUR PROTEIN 2, MITOCHONDRIAL"/>
    <property type="match status" value="1"/>
</dbReference>
<dbReference type="PANTHER" id="PTHR11993">
    <property type="entry name" value="NADH-UBIQUINONE OXIDOREDUCTASE 49 KDA SUBUNIT"/>
    <property type="match status" value="1"/>
</dbReference>
<dbReference type="Pfam" id="PF00346">
    <property type="entry name" value="Complex1_49kDa"/>
    <property type="match status" value="1"/>
</dbReference>
<dbReference type="SUPFAM" id="SSF56762">
    <property type="entry name" value="HydB/Nqo4-like"/>
    <property type="match status" value="1"/>
</dbReference>